<organismHost>
    <name type="scientific">Marmota monax</name>
    <name type="common">Woodchuck</name>
    <dbReference type="NCBI Taxonomy" id="9995"/>
</organismHost>
<protein>
    <recommendedName>
        <fullName evidence="2">External core antigen</fullName>
    </recommendedName>
    <alternativeName>
        <fullName evidence="2">HBeAg</fullName>
    </alternativeName>
    <alternativeName>
        <fullName evidence="2">Precore protein</fullName>
    </alternativeName>
    <alternativeName>
        <fullName evidence="2">p25</fullName>
    </alternativeName>
</protein>
<evidence type="ECO:0000250" key="1"/>
<evidence type="ECO:0000255" key="2">
    <source>
        <dbReference type="HAMAP-Rule" id="MF_04076"/>
    </source>
</evidence>
<evidence type="ECO:0000256" key="3">
    <source>
        <dbReference type="SAM" id="MobiDB-lite"/>
    </source>
</evidence>
<gene>
    <name evidence="2" type="primary">C</name>
</gene>
<accession>P0C6J6</accession>
<keyword id="KW-0024">Alternative initiation</keyword>
<keyword id="KW-1015">Disulfide bond</keyword>
<keyword id="KW-1048">Host nucleus</keyword>
<keyword id="KW-0945">Host-virus interaction</keyword>
<keyword id="KW-1185">Reference proteome</keyword>
<keyword id="KW-0677">Repeat</keyword>
<keyword id="KW-0964">Secreted</keyword>
<keyword id="KW-0732">Signal</keyword>
<keyword id="KW-0899">Viral immunoevasion</keyword>
<name>HBEAG_WHV5</name>
<proteinExistence type="inferred from homology"/>
<dbReference type="EMBL" id="J04514">
    <property type="status" value="NOT_ANNOTATED_CDS"/>
    <property type="molecule type" value="Genomic_DNA"/>
</dbReference>
<dbReference type="SMR" id="P0C6J6"/>
<dbReference type="Proteomes" id="UP000000287">
    <property type="component" value="Genome"/>
</dbReference>
<dbReference type="GO" id="GO:0005576">
    <property type="term" value="C:extracellular region"/>
    <property type="evidence" value="ECO:0007669"/>
    <property type="project" value="UniProtKB-SubCell"/>
</dbReference>
<dbReference type="GO" id="GO:0043657">
    <property type="term" value="C:host cell"/>
    <property type="evidence" value="ECO:0007669"/>
    <property type="project" value="GOC"/>
</dbReference>
<dbReference type="GO" id="GO:0030430">
    <property type="term" value="C:host cell cytoplasm"/>
    <property type="evidence" value="ECO:0007669"/>
    <property type="project" value="UniProtKB-UniRule"/>
</dbReference>
<dbReference type="GO" id="GO:0042025">
    <property type="term" value="C:host cell nucleus"/>
    <property type="evidence" value="ECO:0007669"/>
    <property type="project" value="UniProtKB-SubCell"/>
</dbReference>
<dbReference type="GO" id="GO:0039619">
    <property type="term" value="C:T=4 icosahedral viral capsid"/>
    <property type="evidence" value="ECO:0007669"/>
    <property type="project" value="UniProtKB-UniRule"/>
</dbReference>
<dbReference type="GO" id="GO:0003677">
    <property type="term" value="F:DNA binding"/>
    <property type="evidence" value="ECO:0007669"/>
    <property type="project" value="UniProtKB-UniRule"/>
</dbReference>
<dbReference type="GO" id="GO:0003723">
    <property type="term" value="F:RNA binding"/>
    <property type="evidence" value="ECO:0007669"/>
    <property type="project" value="UniProtKB-UniRule"/>
</dbReference>
<dbReference type="GO" id="GO:0005198">
    <property type="term" value="F:structural molecule activity"/>
    <property type="evidence" value="ECO:0007669"/>
    <property type="project" value="UniProtKB-UniRule"/>
</dbReference>
<dbReference type="GO" id="GO:0075521">
    <property type="term" value="P:microtubule-dependent intracellular transport of viral material towards nucleus"/>
    <property type="evidence" value="ECO:0007669"/>
    <property type="project" value="UniProtKB-UniRule"/>
</dbReference>
<dbReference type="GO" id="GO:0046718">
    <property type="term" value="P:symbiont entry into host cell"/>
    <property type="evidence" value="ECO:0007669"/>
    <property type="project" value="UniProtKB-UniRule"/>
</dbReference>
<dbReference type="GO" id="GO:0075732">
    <property type="term" value="P:viral penetration into host nucleus"/>
    <property type="evidence" value="ECO:0007669"/>
    <property type="project" value="UniProtKB-UniRule"/>
</dbReference>
<dbReference type="Gene3D" id="1.10.4090.10">
    <property type="entry name" value="Viral capsid, core domain supefamily, Hepatitis B virus"/>
    <property type="match status" value="1"/>
</dbReference>
<dbReference type="HAMAP" id="MF_04076">
    <property type="entry name" value="HBV_HBEAG"/>
    <property type="match status" value="1"/>
</dbReference>
<dbReference type="InterPro" id="IPR013195">
    <property type="entry name" value="Hepatitis_B_virus_capsid_N"/>
</dbReference>
<dbReference type="InterPro" id="IPR002006">
    <property type="entry name" value="Hepatitis_core"/>
</dbReference>
<dbReference type="InterPro" id="IPR036459">
    <property type="entry name" value="Viral_capsid_core_dom_sf_HBV"/>
</dbReference>
<dbReference type="Pfam" id="PF08290">
    <property type="entry name" value="Hep_core_N"/>
    <property type="match status" value="1"/>
</dbReference>
<dbReference type="Pfam" id="PF00906">
    <property type="entry name" value="Hepatitis_core"/>
    <property type="match status" value="3"/>
</dbReference>
<dbReference type="SUPFAM" id="SSF47852">
    <property type="entry name" value="Hepatitis B viral capsid (hbcag)"/>
    <property type="match status" value="1"/>
</dbReference>
<organism>
    <name type="scientific">Woodchuck hepatitis B virus (isolate 8)</name>
    <name type="common">WHV</name>
    <dbReference type="NCBI Taxonomy" id="10433"/>
    <lineage>
        <taxon>Viruses</taxon>
        <taxon>Riboviria</taxon>
        <taxon>Pararnavirae</taxon>
        <taxon>Artverviricota</taxon>
        <taxon>Revtraviricetes</taxon>
        <taxon>Blubervirales</taxon>
        <taxon>Hepadnaviridae</taxon>
        <taxon>Orthohepadnavirus</taxon>
        <taxon>Woodchuck hepatitis virus</taxon>
    </lineage>
</organism>
<reference key="1">
    <citation type="journal article" date="1989" name="Proc. Natl. Acad. Sci. U.S.A.">
        <title>Complete nucleotide sequence of a molecular clone of woodchuck hepatitis virus that is infectious in the natural host.</title>
        <authorList>
            <person name="Girones R."/>
            <person name="Cote P.J."/>
            <person name="Hornbuckle W.E."/>
            <person name="Tennant B.C."/>
            <person name="Gerin J.L."/>
            <person name="Purcell R.H."/>
            <person name="Miller R.H."/>
        </authorList>
    </citation>
    <scope>NUCLEOTIDE SEQUENCE [GENOMIC DNA]</scope>
    <source>
        <strain>Infectious clone</strain>
    </source>
</reference>
<sequence length="218" mass="25124">MYLFHLCLVFACVPCPTFQASKLCLGWLWGMDIDPYKEFGSSYQLLNFLPLDFFPDLNALVDTATALYEEELTGREHCSPHHTAIRQALVCWDELTKLIAWMSSNITSEQVRTIIVNHVNDTWGLKVRQSLWFHLSCLTFGQHTVQEFLVSFGVWIRTPAPYRPPNAPILSTLPEHTVIRRRGGARASRSPRRRTPSPRRRRSQSPRRRRSQSPSANC</sequence>
<feature type="signal peptide" evidence="2">
    <location>
        <begin position="1"/>
        <end position="19"/>
    </location>
</feature>
<feature type="chain" id="PRO_0000324748" description="External core antigen" evidence="2">
    <location>
        <begin position="20"/>
        <end position="218"/>
    </location>
</feature>
<feature type="propeptide" id="PRO_0000324749" evidence="1">
    <location>
        <begin position="190"/>
        <end position="218"/>
    </location>
</feature>
<feature type="repeat" description="1; half-length">
    <location>
        <begin position="190"/>
        <end position="196"/>
    </location>
</feature>
<feature type="repeat" description="2">
    <location>
        <begin position="197"/>
        <end position="204"/>
    </location>
</feature>
<feature type="repeat" description="3">
    <location>
        <begin position="205"/>
        <end position="212"/>
    </location>
</feature>
<feature type="region of interest" description="HBEAG" evidence="2">
    <location>
        <begin position="26"/>
        <end position="28"/>
    </location>
</feature>
<feature type="region of interest" description="Disordered" evidence="3">
    <location>
        <begin position="180"/>
        <end position="218"/>
    </location>
</feature>
<feature type="region of interest" description="3 X 8 AA repeats of S-P-R-R-R-R-S-Q">
    <location>
        <begin position="190"/>
        <end position="212"/>
    </location>
</feature>
<feature type="compositionally biased region" description="Basic residues" evidence="3">
    <location>
        <begin position="180"/>
        <end position="211"/>
    </location>
</feature>
<feature type="site" description="Cleavage; by host" evidence="2">
    <location>
        <begin position="189"/>
        <end position="190"/>
    </location>
</feature>
<feature type="disulfide bond" description="Interchain" evidence="2">
    <location>
        <position position="78"/>
    </location>
</feature>
<feature type="disulfide bond" description="Interchain" evidence="2">
    <location>
        <position position="91"/>
    </location>
</feature>
<comment type="function">
    <text evidence="2">May regulate immune response to the intracellular capsid in acting as a T-cell tolerogen, by having an immunoregulatory effect which prevents destruction of infected cells by cytotoxic T-cells. This immune regulation may predispose to chronicity during perinatal infections and prevent severe liver injury during adult infections.</text>
</comment>
<comment type="subunit">
    <text evidence="2">Homodimerizes.</text>
</comment>
<comment type="subcellular location">
    <subcellularLocation>
        <location evidence="2">Secreted</location>
    </subcellularLocation>
    <subcellularLocation>
        <location evidence="2">Host nucleus</location>
    </subcellularLocation>
</comment>
<comment type="alternative products">
    <event type="alternative initiation"/>
    <isoform>
        <id>P0C6J6-1</id>
        <name>External core antigen</name>
        <sequence type="displayed"/>
    </isoform>
    <isoform>
        <id>P69711-1</id>
        <name>Capsid protein</name>
        <sequence type="external"/>
    </isoform>
</comment>
<comment type="PTM">
    <text evidence="2">Phosphorylated.</text>
</comment>
<comment type="PTM">
    <text evidence="2">Cleaved by host furin.</text>
</comment>
<comment type="similarity">
    <text evidence="2">Belongs to the orthohepadnavirus precore antigen family.</text>
</comment>